<dbReference type="EC" id="2.7.8.13" evidence="1"/>
<dbReference type="EMBL" id="AL590842">
    <property type="protein sequence ID" value="CAL19231.1"/>
    <property type="molecule type" value="Genomic_DNA"/>
</dbReference>
<dbReference type="EMBL" id="AE009952">
    <property type="protein sequence ID" value="AAM87177.1"/>
    <property type="molecule type" value="Genomic_DNA"/>
</dbReference>
<dbReference type="EMBL" id="AE017042">
    <property type="protein sequence ID" value="AAS63780.1"/>
    <property type="molecule type" value="Genomic_DNA"/>
</dbReference>
<dbReference type="PIR" id="AE0068">
    <property type="entry name" value="AE0068"/>
</dbReference>
<dbReference type="RefSeq" id="WP_002210437.1">
    <property type="nucleotide sequence ID" value="NZ_WUCM01000081.1"/>
</dbReference>
<dbReference type="RefSeq" id="YP_002345623.1">
    <property type="nucleotide sequence ID" value="NC_003143.1"/>
</dbReference>
<dbReference type="SMR" id="Q8ZIF2"/>
<dbReference type="STRING" id="214092.YPO0552"/>
<dbReference type="PaxDb" id="214092-YPO0552"/>
<dbReference type="DNASU" id="1148576"/>
<dbReference type="EnsemblBacteria" id="AAS63780">
    <property type="protein sequence ID" value="AAS63780"/>
    <property type="gene ID" value="YP_3632"/>
</dbReference>
<dbReference type="GeneID" id="57974063"/>
<dbReference type="KEGG" id="ype:YPO0552"/>
<dbReference type="KEGG" id="ypk:y3629"/>
<dbReference type="KEGG" id="ypm:YP_3632"/>
<dbReference type="PATRIC" id="fig|214092.21.peg.805"/>
<dbReference type="eggNOG" id="COG0472">
    <property type="taxonomic scope" value="Bacteria"/>
</dbReference>
<dbReference type="HOGENOM" id="CLU_023982_0_0_6"/>
<dbReference type="OMA" id="DTPTMGG"/>
<dbReference type="OrthoDB" id="9805475at2"/>
<dbReference type="UniPathway" id="UPA00219"/>
<dbReference type="Proteomes" id="UP000000815">
    <property type="component" value="Chromosome"/>
</dbReference>
<dbReference type="Proteomes" id="UP000001019">
    <property type="component" value="Chromosome"/>
</dbReference>
<dbReference type="Proteomes" id="UP000002490">
    <property type="component" value="Chromosome"/>
</dbReference>
<dbReference type="GO" id="GO:0005886">
    <property type="term" value="C:plasma membrane"/>
    <property type="evidence" value="ECO:0000318"/>
    <property type="project" value="GO_Central"/>
</dbReference>
<dbReference type="GO" id="GO:0046872">
    <property type="term" value="F:metal ion binding"/>
    <property type="evidence" value="ECO:0007669"/>
    <property type="project" value="UniProtKB-KW"/>
</dbReference>
<dbReference type="GO" id="GO:0008963">
    <property type="term" value="F:phospho-N-acetylmuramoyl-pentapeptide-transferase activity"/>
    <property type="evidence" value="ECO:0000318"/>
    <property type="project" value="GO_Central"/>
</dbReference>
<dbReference type="GO" id="GO:0051992">
    <property type="term" value="F:UDP-N-acetylmuramoyl-L-alanyl-D-glutamyl-meso-2,6-diaminopimelyl-D-alanyl-D-alanine:undecaprenyl-phosphate transferase activity"/>
    <property type="evidence" value="ECO:0007669"/>
    <property type="project" value="RHEA"/>
</dbReference>
<dbReference type="GO" id="GO:0051301">
    <property type="term" value="P:cell division"/>
    <property type="evidence" value="ECO:0007669"/>
    <property type="project" value="UniProtKB-KW"/>
</dbReference>
<dbReference type="GO" id="GO:0044038">
    <property type="term" value="P:cell wall macromolecule biosynthetic process"/>
    <property type="evidence" value="ECO:0000318"/>
    <property type="project" value="GO_Central"/>
</dbReference>
<dbReference type="GO" id="GO:0071555">
    <property type="term" value="P:cell wall organization"/>
    <property type="evidence" value="ECO:0000318"/>
    <property type="project" value="GO_Central"/>
</dbReference>
<dbReference type="GO" id="GO:0009252">
    <property type="term" value="P:peptidoglycan biosynthetic process"/>
    <property type="evidence" value="ECO:0007669"/>
    <property type="project" value="UniProtKB-UniRule"/>
</dbReference>
<dbReference type="GO" id="GO:0008360">
    <property type="term" value="P:regulation of cell shape"/>
    <property type="evidence" value="ECO:0007669"/>
    <property type="project" value="UniProtKB-KW"/>
</dbReference>
<dbReference type="CDD" id="cd06852">
    <property type="entry name" value="GT_MraY"/>
    <property type="match status" value="1"/>
</dbReference>
<dbReference type="HAMAP" id="MF_00038">
    <property type="entry name" value="MraY"/>
    <property type="match status" value="1"/>
</dbReference>
<dbReference type="InterPro" id="IPR000715">
    <property type="entry name" value="Glycosyl_transferase_4"/>
</dbReference>
<dbReference type="InterPro" id="IPR003524">
    <property type="entry name" value="PNAcMuramoyl-5peptid_Trfase"/>
</dbReference>
<dbReference type="InterPro" id="IPR018480">
    <property type="entry name" value="PNAcMuramoyl-5peptid_Trfase_CS"/>
</dbReference>
<dbReference type="NCBIfam" id="TIGR00445">
    <property type="entry name" value="mraY"/>
    <property type="match status" value="1"/>
</dbReference>
<dbReference type="PANTHER" id="PTHR22926">
    <property type="entry name" value="PHOSPHO-N-ACETYLMURAMOYL-PENTAPEPTIDE-TRANSFERASE"/>
    <property type="match status" value="1"/>
</dbReference>
<dbReference type="PANTHER" id="PTHR22926:SF5">
    <property type="entry name" value="PHOSPHO-N-ACETYLMURAMOYL-PENTAPEPTIDE-TRANSFERASE HOMOLOG"/>
    <property type="match status" value="1"/>
</dbReference>
<dbReference type="Pfam" id="PF00953">
    <property type="entry name" value="Glycos_transf_4"/>
    <property type="match status" value="1"/>
</dbReference>
<dbReference type="Pfam" id="PF10555">
    <property type="entry name" value="MraY_sig1"/>
    <property type="match status" value="1"/>
</dbReference>
<dbReference type="PROSITE" id="PS01347">
    <property type="entry name" value="MRAY_1"/>
    <property type="match status" value="1"/>
</dbReference>
<dbReference type="PROSITE" id="PS01348">
    <property type="entry name" value="MRAY_2"/>
    <property type="match status" value="1"/>
</dbReference>
<evidence type="ECO:0000255" key="1">
    <source>
        <dbReference type="HAMAP-Rule" id="MF_00038"/>
    </source>
</evidence>
<proteinExistence type="inferred from homology"/>
<accession>Q8ZIF2</accession>
<accession>Q0WJB5</accession>
<comment type="function">
    <text evidence="1">Catalyzes the initial step of the lipid cycle reactions in the biosynthesis of the cell wall peptidoglycan: transfers peptidoglycan precursor phospho-MurNAc-pentapeptide from UDP-MurNAc-pentapeptide onto the lipid carrier undecaprenyl phosphate, yielding undecaprenyl-pyrophosphoryl-MurNAc-pentapeptide, known as lipid I.</text>
</comment>
<comment type="catalytic activity">
    <reaction evidence="1">
        <text>UDP-N-acetyl-alpha-D-muramoyl-L-alanyl-gamma-D-glutamyl-meso-2,6-diaminopimeloyl-D-alanyl-D-alanine + di-trans,octa-cis-undecaprenyl phosphate = di-trans,octa-cis-undecaprenyl diphospho-N-acetyl-alpha-D-muramoyl-L-alanyl-D-glutamyl-meso-2,6-diaminopimeloyl-D-alanyl-D-alanine + UMP</text>
        <dbReference type="Rhea" id="RHEA:28386"/>
        <dbReference type="ChEBI" id="CHEBI:57865"/>
        <dbReference type="ChEBI" id="CHEBI:60392"/>
        <dbReference type="ChEBI" id="CHEBI:61386"/>
        <dbReference type="ChEBI" id="CHEBI:61387"/>
        <dbReference type="EC" id="2.7.8.13"/>
    </reaction>
</comment>
<comment type="cofactor">
    <cofactor evidence="1">
        <name>Mg(2+)</name>
        <dbReference type="ChEBI" id="CHEBI:18420"/>
    </cofactor>
</comment>
<comment type="pathway">
    <text evidence="1">Cell wall biogenesis; peptidoglycan biosynthesis.</text>
</comment>
<comment type="subcellular location">
    <subcellularLocation>
        <location evidence="1">Cell inner membrane</location>
        <topology evidence="1">Multi-pass membrane protein</topology>
    </subcellularLocation>
</comment>
<comment type="similarity">
    <text evidence="1">Belongs to the glycosyltransferase 4 family. MraY subfamily.</text>
</comment>
<protein>
    <recommendedName>
        <fullName evidence="1">Phospho-N-acetylmuramoyl-pentapeptide-transferase</fullName>
        <ecNumber evidence="1">2.7.8.13</ecNumber>
    </recommendedName>
    <alternativeName>
        <fullName evidence="1">UDP-MurNAc-pentapeptide phosphotransferase</fullName>
    </alternativeName>
</protein>
<sequence length="360" mass="40077">MLVWLAEYLVKFYSGFNVFSYLTFRAIVSLLTALFISLWMGPHLIAWLQKLQIGQVVRNDGPESHFSKRGTPTMGGLMILFSITISVLMWAYPSNPYVWCVLFILIGYGIVGFIDDYRKVVRKNTKGLIARWKYFWQSIIALAAAFTMYSIGKDTSATELVVPFFKDIMPQLGLLYVLLAYFVIVGTSNAVNLTDGLDGLAIMPTVFVAAGFALVAWATGNVNFAAYLHIPYLRHAGELVIVCTAIVGAGLGFLWFNTYPAQVFMGDVGSLALGGALGTIAVLLRQEFLLVIMGGVFVVETLSVILQVGSFKLRGQRIFRMAPIHHHYELKGWPEPRVIVRFWIISLMLVLIGLATLKVR</sequence>
<organism>
    <name type="scientific">Yersinia pestis</name>
    <dbReference type="NCBI Taxonomy" id="632"/>
    <lineage>
        <taxon>Bacteria</taxon>
        <taxon>Pseudomonadati</taxon>
        <taxon>Pseudomonadota</taxon>
        <taxon>Gammaproteobacteria</taxon>
        <taxon>Enterobacterales</taxon>
        <taxon>Yersiniaceae</taxon>
        <taxon>Yersinia</taxon>
    </lineage>
</organism>
<reference key="1">
    <citation type="journal article" date="2001" name="Nature">
        <title>Genome sequence of Yersinia pestis, the causative agent of plague.</title>
        <authorList>
            <person name="Parkhill J."/>
            <person name="Wren B.W."/>
            <person name="Thomson N.R."/>
            <person name="Titball R.W."/>
            <person name="Holden M.T.G."/>
            <person name="Prentice M.B."/>
            <person name="Sebaihia M."/>
            <person name="James K.D."/>
            <person name="Churcher C.M."/>
            <person name="Mungall K.L."/>
            <person name="Baker S."/>
            <person name="Basham D."/>
            <person name="Bentley S.D."/>
            <person name="Brooks K."/>
            <person name="Cerdeno-Tarraga A.-M."/>
            <person name="Chillingworth T."/>
            <person name="Cronin A."/>
            <person name="Davies R.M."/>
            <person name="Davis P."/>
            <person name="Dougan G."/>
            <person name="Feltwell T."/>
            <person name="Hamlin N."/>
            <person name="Holroyd S."/>
            <person name="Jagels K."/>
            <person name="Karlyshev A.V."/>
            <person name="Leather S."/>
            <person name="Moule S."/>
            <person name="Oyston P.C.F."/>
            <person name="Quail M.A."/>
            <person name="Rutherford K.M."/>
            <person name="Simmonds M."/>
            <person name="Skelton J."/>
            <person name="Stevens K."/>
            <person name="Whitehead S."/>
            <person name="Barrell B.G."/>
        </authorList>
    </citation>
    <scope>NUCLEOTIDE SEQUENCE [LARGE SCALE GENOMIC DNA]</scope>
    <source>
        <strain>CO-92 / Biovar Orientalis</strain>
    </source>
</reference>
<reference key="2">
    <citation type="journal article" date="2002" name="J. Bacteriol.">
        <title>Genome sequence of Yersinia pestis KIM.</title>
        <authorList>
            <person name="Deng W."/>
            <person name="Burland V."/>
            <person name="Plunkett G. III"/>
            <person name="Boutin A."/>
            <person name="Mayhew G.F."/>
            <person name="Liss P."/>
            <person name="Perna N.T."/>
            <person name="Rose D.J."/>
            <person name="Mau B."/>
            <person name="Zhou S."/>
            <person name="Schwartz D.C."/>
            <person name="Fetherston J.D."/>
            <person name="Lindler L.E."/>
            <person name="Brubaker R.R."/>
            <person name="Plano G.V."/>
            <person name="Straley S.C."/>
            <person name="McDonough K.A."/>
            <person name="Nilles M.L."/>
            <person name="Matson J.S."/>
            <person name="Blattner F.R."/>
            <person name="Perry R.D."/>
        </authorList>
    </citation>
    <scope>NUCLEOTIDE SEQUENCE [LARGE SCALE GENOMIC DNA]</scope>
    <source>
        <strain>KIM10+ / Biovar Mediaevalis</strain>
    </source>
</reference>
<reference key="3">
    <citation type="journal article" date="2004" name="DNA Res.">
        <title>Complete genome sequence of Yersinia pestis strain 91001, an isolate avirulent to humans.</title>
        <authorList>
            <person name="Song Y."/>
            <person name="Tong Z."/>
            <person name="Wang J."/>
            <person name="Wang L."/>
            <person name="Guo Z."/>
            <person name="Han Y."/>
            <person name="Zhang J."/>
            <person name="Pei D."/>
            <person name="Zhou D."/>
            <person name="Qin H."/>
            <person name="Pang X."/>
            <person name="Han Y."/>
            <person name="Zhai J."/>
            <person name="Li M."/>
            <person name="Cui B."/>
            <person name="Qi Z."/>
            <person name="Jin L."/>
            <person name="Dai R."/>
            <person name="Chen F."/>
            <person name="Li S."/>
            <person name="Ye C."/>
            <person name="Du Z."/>
            <person name="Lin W."/>
            <person name="Wang J."/>
            <person name="Yu J."/>
            <person name="Yang H."/>
            <person name="Wang J."/>
            <person name="Huang P."/>
            <person name="Yang R."/>
        </authorList>
    </citation>
    <scope>NUCLEOTIDE SEQUENCE [LARGE SCALE GENOMIC DNA]</scope>
    <source>
        <strain>91001 / Biovar Mediaevalis</strain>
    </source>
</reference>
<name>MRAY_YERPE</name>
<gene>
    <name evidence="1" type="primary">mraY</name>
    <name type="ordered locus">YPO0552</name>
    <name type="ordered locus">y3629</name>
    <name type="ordered locus">YP_3632</name>
</gene>
<keyword id="KW-0131">Cell cycle</keyword>
<keyword id="KW-0132">Cell division</keyword>
<keyword id="KW-0997">Cell inner membrane</keyword>
<keyword id="KW-1003">Cell membrane</keyword>
<keyword id="KW-0133">Cell shape</keyword>
<keyword id="KW-0961">Cell wall biogenesis/degradation</keyword>
<keyword id="KW-0460">Magnesium</keyword>
<keyword id="KW-0472">Membrane</keyword>
<keyword id="KW-0479">Metal-binding</keyword>
<keyword id="KW-0573">Peptidoglycan synthesis</keyword>
<keyword id="KW-1185">Reference proteome</keyword>
<keyword id="KW-0808">Transferase</keyword>
<keyword id="KW-0812">Transmembrane</keyword>
<keyword id="KW-1133">Transmembrane helix</keyword>
<feature type="chain" id="PRO_0000108934" description="Phospho-N-acetylmuramoyl-pentapeptide-transferase">
    <location>
        <begin position="1"/>
        <end position="360"/>
    </location>
</feature>
<feature type="transmembrane region" description="Helical" evidence="1">
    <location>
        <begin position="27"/>
        <end position="47"/>
    </location>
</feature>
<feature type="transmembrane region" description="Helical" evidence="1">
    <location>
        <begin position="72"/>
        <end position="92"/>
    </location>
</feature>
<feature type="transmembrane region" description="Helical" evidence="1">
    <location>
        <begin position="94"/>
        <end position="114"/>
    </location>
</feature>
<feature type="transmembrane region" description="Helical" evidence="1">
    <location>
        <begin position="132"/>
        <end position="152"/>
    </location>
</feature>
<feature type="transmembrane region" description="Helical" evidence="1">
    <location>
        <begin position="168"/>
        <end position="188"/>
    </location>
</feature>
<feature type="transmembrane region" description="Helical" evidence="1">
    <location>
        <begin position="199"/>
        <end position="219"/>
    </location>
</feature>
<feature type="transmembrane region" description="Helical" evidence="1">
    <location>
        <begin position="236"/>
        <end position="256"/>
    </location>
</feature>
<feature type="transmembrane region" description="Helical" evidence="1">
    <location>
        <begin position="263"/>
        <end position="283"/>
    </location>
</feature>
<feature type="transmembrane region" description="Helical" evidence="1">
    <location>
        <begin position="288"/>
        <end position="308"/>
    </location>
</feature>
<feature type="transmembrane region" description="Helical" evidence="1">
    <location>
        <begin position="338"/>
        <end position="358"/>
    </location>
</feature>